<protein>
    <recommendedName>
        <fullName evidence="1">Large ribosomal subunit protein uL14</fullName>
    </recommendedName>
    <alternativeName>
        <fullName evidence="2">50S ribosomal protein L14</fullName>
    </alternativeName>
</protein>
<evidence type="ECO:0000255" key="1">
    <source>
        <dbReference type="HAMAP-Rule" id="MF_01367"/>
    </source>
</evidence>
<evidence type="ECO:0000305" key="2"/>
<keyword id="KW-1185">Reference proteome</keyword>
<keyword id="KW-0687">Ribonucleoprotein</keyword>
<keyword id="KW-0689">Ribosomal protein</keyword>
<keyword id="KW-0694">RNA-binding</keyword>
<keyword id="KW-0699">rRNA-binding</keyword>
<sequence length="119" mass="12690">MIQKNTLLDVADNSGARKVLCIGLLNGKKSASVGDVIVVSTKLITPRGKVSKGKVYKAVIVRVKKAVRRLDGSVIKFSSNAVVLINDQGDPLGTRVFGPIKKLPFGLFSKVMSLAVEVL</sequence>
<proteinExistence type="inferred from homology"/>
<feature type="chain" id="PRO_0000355815" description="Large ribosomal subunit protein uL14">
    <location>
        <begin position="1"/>
        <end position="119"/>
    </location>
</feature>
<organism>
    <name type="scientific">Ehrlichia chaffeensis (strain ATCC CRL-10679 / Arkansas)</name>
    <dbReference type="NCBI Taxonomy" id="205920"/>
    <lineage>
        <taxon>Bacteria</taxon>
        <taxon>Pseudomonadati</taxon>
        <taxon>Pseudomonadota</taxon>
        <taxon>Alphaproteobacteria</taxon>
        <taxon>Rickettsiales</taxon>
        <taxon>Anaplasmataceae</taxon>
        <taxon>Ehrlichia</taxon>
    </lineage>
</organism>
<comment type="function">
    <text evidence="1">Binds to 23S rRNA. Forms part of two intersubunit bridges in the 70S ribosome.</text>
</comment>
<comment type="subunit">
    <text evidence="1">Part of the 50S ribosomal subunit. Forms a cluster with proteins L3 and L19. In the 70S ribosome, L14 and L19 interact and together make contacts with the 16S rRNA in bridges B5 and B8.</text>
</comment>
<comment type="similarity">
    <text evidence="1">Belongs to the universal ribosomal protein uL14 family.</text>
</comment>
<name>RL14_EHRCR</name>
<reference key="1">
    <citation type="journal article" date="2006" name="PLoS Genet.">
        <title>Comparative genomics of emerging human ehrlichiosis agents.</title>
        <authorList>
            <person name="Dunning Hotopp J.C."/>
            <person name="Lin M."/>
            <person name="Madupu R."/>
            <person name="Crabtree J."/>
            <person name="Angiuoli S.V."/>
            <person name="Eisen J.A."/>
            <person name="Seshadri R."/>
            <person name="Ren Q."/>
            <person name="Wu M."/>
            <person name="Utterback T.R."/>
            <person name="Smith S."/>
            <person name="Lewis M."/>
            <person name="Khouri H."/>
            <person name="Zhang C."/>
            <person name="Niu H."/>
            <person name="Lin Q."/>
            <person name="Ohashi N."/>
            <person name="Zhi N."/>
            <person name="Nelson W.C."/>
            <person name="Brinkac L.M."/>
            <person name="Dodson R.J."/>
            <person name="Rosovitz M.J."/>
            <person name="Sundaram J.P."/>
            <person name="Daugherty S.C."/>
            <person name="Davidsen T."/>
            <person name="Durkin A.S."/>
            <person name="Gwinn M.L."/>
            <person name="Haft D.H."/>
            <person name="Selengut J.D."/>
            <person name="Sullivan S.A."/>
            <person name="Zafar N."/>
            <person name="Zhou L."/>
            <person name="Benahmed F."/>
            <person name="Forberger H."/>
            <person name="Halpin R."/>
            <person name="Mulligan S."/>
            <person name="Robinson J."/>
            <person name="White O."/>
            <person name="Rikihisa Y."/>
            <person name="Tettelin H."/>
        </authorList>
    </citation>
    <scope>NUCLEOTIDE SEQUENCE [LARGE SCALE GENOMIC DNA]</scope>
    <source>
        <strain>ATCC CRL-10679 / Arkansas</strain>
    </source>
</reference>
<gene>
    <name evidence="1" type="primary">rplN</name>
    <name type="ordered locus">ECH_0419</name>
</gene>
<dbReference type="EMBL" id="CP000236">
    <property type="protein sequence ID" value="ABD44826.1"/>
    <property type="molecule type" value="Genomic_DNA"/>
</dbReference>
<dbReference type="RefSeq" id="WP_011452586.1">
    <property type="nucleotide sequence ID" value="NC_007799.1"/>
</dbReference>
<dbReference type="SMR" id="Q2GH46"/>
<dbReference type="STRING" id="205920.ECH_0419"/>
<dbReference type="KEGG" id="ech:ECH_0419"/>
<dbReference type="eggNOG" id="COG0093">
    <property type="taxonomic scope" value="Bacteria"/>
</dbReference>
<dbReference type="HOGENOM" id="CLU_095071_2_2_5"/>
<dbReference type="OrthoDB" id="9806379at2"/>
<dbReference type="Proteomes" id="UP000008320">
    <property type="component" value="Chromosome"/>
</dbReference>
<dbReference type="GO" id="GO:0022625">
    <property type="term" value="C:cytosolic large ribosomal subunit"/>
    <property type="evidence" value="ECO:0007669"/>
    <property type="project" value="TreeGrafter"/>
</dbReference>
<dbReference type="GO" id="GO:0070180">
    <property type="term" value="F:large ribosomal subunit rRNA binding"/>
    <property type="evidence" value="ECO:0007669"/>
    <property type="project" value="TreeGrafter"/>
</dbReference>
<dbReference type="GO" id="GO:0003735">
    <property type="term" value="F:structural constituent of ribosome"/>
    <property type="evidence" value="ECO:0007669"/>
    <property type="project" value="InterPro"/>
</dbReference>
<dbReference type="GO" id="GO:0006412">
    <property type="term" value="P:translation"/>
    <property type="evidence" value="ECO:0007669"/>
    <property type="project" value="UniProtKB-UniRule"/>
</dbReference>
<dbReference type="CDD" id="cd00337">
    <property type="entry name" value="Ribosomal_uL14"/>
    <property type="match status" value="1"/>
</dbReference>
<dbReference type="Gene3D" id="2.40.150.20">
    <property type="entry name" value="Ribosomal protein L14"/>
    <property type="match status" value="1"/>
</dbReference>
<dbReference type="HAMAP" id="MF_01367">
    <property type="entry name" value="Ribosomal_uL14"/>
    <property type="match status" value="1"/>
</dbReference>
<dbReference type="InterPro" id="IPR000218">
    <property type="entry name" value="Ribosomal_uL14"/>
</dbReference>
<dbReference type="InterPro" id="IPR005745">
    <property type="entry name" value="Ribosomal_uL14_bac-type"/>
</dbReference>
<dbReference type="InterPro" id="IPR019972">
    <property type="entry name" value="Ribosomal_uL14_CS"/>
</dbReference>
<dbReference type="InterPro" id="IPR036853">
    <property type="entry name" value="Ribosomal_uL14_sf"/>
</dbReference>
<dbReference type="NCBIfam" id="TIGR01067">
    <property type="entry name" value="rplN_bact"/>
    <property type="match status" value="1"/>
</dbReference>
<dbReference type="PANTHER" id="PTHR11761">
    <property type="entry name" value="50S/60S RIBOSOMAL PROTEIN L14/L23"/>
    <property type="match status" value="1"/>
</dbReference>
<dbReference type="PANTHER" id="PTHR11761:SF3">
    <property type="entry name" value="LARGE RIBOSOMAL SUBUNIT PROTEIN UL14M"/>
    <property type="match status" value="1"/>
</dbReference>
<dbReference type="Pfam" id="PF00238">
    <property type="entry name" value="Ribosomal_L14"/>
    <property type="match status" value="1"/>
</dbReference>
<dbReference type="SMART" id="SM01374">
    <property type="entry name" value="Ribosomal_L14"/>
    <property type="match status" value="1"/>
</dbReference>
<dbReference type="SUPFAM" id="SSF50193">
    <property type="entry name" value="Ribosomal protein L14"/>
    <property type="match status" value="1"/>
</dbReference>
<dbReference type="PROSITE" id="PS00049">
    <property type="entry name" value="RIBOSOMAL_L14"/>
    <property type="match status" value="1"/>
</dbReference>
<accession>Q2GH46</accession>